<dbReference type="EMBL" id="CP000546">
    <property type="protein sequence ID" value="ABN02307.1"/>
    <property type="molecule type" value="Genomic_DNA"/>
</dbReference>
<dbReference type="RefSeq" id="WP_004189865.1">
    <property type="nucleotide sequence ID" value="NC_008836.1"/>
</dbReference>
<dbReference type="SMR" id="A2S4R7"/>
<dbReference type="KEGG" id="bml:BMA10229_A0946"/>
<dbReference type="HOGENOM" id="CLU_105066_2_0_4"/>
<dbReference type="Proteomes" id="UP000002283">
    <property type="component" value="Chromosome I"/>
</dbReference>
<dbReference type="GO" id="GO:0005694">
    <property type="term" value="C:chromosome"/>
    <property type="evidence" value="ECO:0007669"/>
    <property type="project" value="InterPro"/>
</dbReference>
<dbReference type="GO" id="GO:0005829">
    <property type="term" value="C:cytosol"/>
    <property type="evidence" value="ECO:0007669"/>
    <property type="project" value="TreeGrafter"/>
</dbReference>
<dbReference type="GO" id="GO:0003677">
    <property type="term" value="F:DNA binding"/>
    <property type="evidence" value="ECO:0007669"/>
    <property type="project" value="UniProtKB-UniRule"/>
</dbReference>
<dbReference type="GO" id="GO:0030527">
    <property type="term" value="F:structural constituent of chromatin"/>
    <property type="evidence" value="ECO:0007669"/>
    <property type="project" value="InterPro"/>
</dbReference>
<dbReference type="GO" id="GO:0006310">
    <property type="term" value="P:DNA recombination"/>
    <property type="evidence" value="ECO:0007669"/>
    <property type="project" value="UniProtKB-UniRule"/>
</dbReference>
<dbReference type="GO" id="GO:0006355">
    <property type="term" value="P:regulation of DNA-templated transcription"/>
    <property type="evidence" value="ECO:0007669"/>
    <property type="project" value="UniProtKB-UniRule"/>
</dbReference>
<dbReference type="GO" id="GO:0006417">
    <property type="term" value="P:regulation of translation"/>
    <property type="evidence" value="ECO:0007669"/>
    <property type="project" value="UniProtKB-UniRule"/>
</dbReference>
<dbReference type="CDD" id="cd13836">
    <property type="entry name" value="IHF_B"/>
    <property type="match status" value="1"/>
</dbReference>
<dbReference type="Gene3D" id="4.10.520.10">
    <property type="entry name" value="IHF-like DNA-binding proteins"/>
    <property type="match status" value="1"/>
</dbReference>
<dbReference type="HAMAP" id="MF_00381">
    <property type="entry name" value="IHF_beta"/>
    <property type="match status" value="1"/>
</dbReference>
<dbReference type="InterPro" id="IPR000119">
    <property type="entry name" value="Hist_DNA-bd"/>
</dbReference>
<dbReference type="InterPro" id="IPR010992">
    <property type="entry name" value="IHF-like_DNA-bd_dom_sf"/>
</dbReference>
<dbReference type="InterPro" id="IPR005685">
    <property type="entry name" value="IHF_beta"/>
</dbReference>
<dbReference type="NCBIfam" id="TIGR00988">
    <property type="entry name" value="hip"/>
    <property type="match status" value="1"/>
</dbReference>
<dbReference type="NCBIfam" id="NF001222">
    <property type="entry name" value="PRK00199.1"/>
    <property type="match status" value="1"/>
</dbReference>
<dbReference type="PANTHER" id="PTHR33175">
    <property type="entry name" value="DNA-BINDING PROTEIN HU"/>
    <property type="match status" value="1"/>
</dbReference>
<dbReference type="PANTHER" id="PTHR33175:SF5">
    <property type="entry name" value="INTEGRATION HOST FACTOR SUBUNIT BETA"/>
    <property type="match status" value="1"/>
</dbReference>
<dbReference type="Pfam" id="PF00216">
    <property type="entry name" value="Bac_DNA_binding"/>
    <property type="match status" value="1"/>
</dbReference>
<dbReference type="PRINTS" id="PR01727">
    <property type="entry name" value="DNABINDINGHU"/>
</dbReference>
<dbReference type="SMART" id="SM00411">
    <property type="entry name" value="BHL"/>
    <property type="match status" value="1"/>
</dbReference>
<dbReference type="SUPFAM" id="SSF47729">
    <property type="entry name" value="IHF-like DNA-binding proteins"/>
    <property type="match status" value="1"/>
</dbReference>
<evidence type="ECO:0000255" key="1">
    <source>
        <dbReference type="HAMAP-Rule" id="MF_00381"/>
    </source>
</evidence>
<evidence type="ECO:0000256" key="2">
    <source>
        <dbReference type="SAM" id="MobiDB-lite"/>
    </source>
</evidence>
<organism>
    <name type="scientific">Burkholderia mallei (strain NCTC 10229)</name>
    <dbReference type="NCBI Taxonomy" id="412022"/>
    <lineage>
        <taxon>Bacteria</taxon>
        <taxon>Pseudomonadati</taxon>
        <taxon>Pseudomonadota</taxon>
        <taxon>Betaproteobacteria</taxon>
        <taxon>Burkholderiales</taxon>
        <taxon>Burkholderiaceae</taxon>
        <taxon>Burkholderia</taxon>
        <taxon>pseudomallei group</taxon>
    </lineage>
</organism>
<sequence>MTKSELVAQLASRFPQLVLKDADFAVKTMLDAMSDALSKGHRIEIRGFGSFGLNRRPARVGRNPKSGEKVQVPEKHVPHFKPGKELRERVDGRAGEPLKNDEPEDAQ</sequence>
<proteinExistence type="inferred from homology"/>
<accession>A2S4R7</accession>
<feature type="chain" id="PRO_1000122195" description="Integration host factor subunit beta">
    <location>
        <begin position="1"/>
        <end position="107"/>
    </location>
</feature>
<feature type="region of interest" description="Disordered" evidence="2">
    <location>
        <begin position="55"/>
        <end position="107"/>
    </location>
</feature>
<feature type="compositionally biased region" description="Basic and acidic residues" evidence="2">
    <location>
        <begin position="65"/>
        <end position="101"/>
    </location>
</feature>
<name>IHFB_BURM9</name>
<protein>
    <recommendedName>
        <fullName evidence="1">Integration host factor subunit beta</fullName>
        <shortName evidence="1">IHF-beta</shortName>
    </recommendedName>
</protein>
<comment type="function">
    <text evidence="1">This protein is one of the two subunits of integration host factor, a specific DNA-binding protein that functions in genetic recombination as well as in transcriptional and translational control.</text>
</comment>
<comment type="subunit">
    <text evidence="1">Heterodimer of an alpha and a beta chain.</text>
</comment>
<comment type="similarity">
    <text evidence="1">Belongs to the bacterial histone-like protein family.</text>
</comment>
<reference key="1">
    <citation type="journal article" date="2010" name="Genome Biol. Evol.">
        <title>Continuing evolution of Burkholderia mallei through genome reduction and large-scale rearrangements.</title>
        <authorList>
            <person name="Losada L."/>
            <person name="Ronning C.M."/>
            <person name="DeShazer D."/>
            <person name="Woods D."/>
            <person name="Fedorova N."/>
            <person name="Kim H.S."/>
            <person name="Shabalina S.A."/>
            <person name="Pearson T.R."/>
            <person name="Brinkac L."/>
            <person name="Tan P."/>
            <person name="Nandi T."/>
            <person name="Crabtree J."/>
            <person name="Badger J."/>
            <person name="Beckstrom-Sternberg S."/>
            <person name="Saqib M."/>
            <person name="Schutzer S.E."/>
            <person name="Keim P."/>
            <person name="Nierman W.C."/>
        </authorList>
    </citation>
    <scope>NUCLEOTIDE SEQUENCE [LARGE SCALE GENOMIC DNA]</scope>
    <source>
        <strain>NCTC 10229</strain>
    </source>
</reference>
<gene>
    <name evidence="1" type="primary">ihfB</name>
    <name evidence="1" type="synonym">himD</name>
    <name type="ordered locus">BMA10229_A0946</name>
</gene>
<keyword id="KW-0233">DNA recombination</keyword>
<keyword id="KW-0238">DNA-binding</keyword>
<keyword id="KW-0804">Transcription</keyword>
<keyword id="KW-0805">Transcription regulation</keyword>
<keyword id="KW-0810">Translation regulation</keyword>